<reference key="1">
    <citation type="journal article" date="2006" name="Science">
        <title>Genomic islands and the ecology and evolution of Prochlorococcus.</title>
        <authorList>
            <person name="Coleman M.L."/>
            <person name="Sullivan M.B."/>
            <person name="Martiny A.C."/>
            <person name="Steglich C."/>
            <person name="Barry K."/>
            <person name="Delong E.F."/>
            <person name="Chisholm S.W."/>
        </authorList>
    </citation>
    <scope>NUCLEOTIDE SEQUENCE [LARGE SCALE GENOMIC DNA]</scope>
    <source>
        <strain>MIT 9312</strain>
    </source>
</reference>
<proteinExistence type="inferred from homology"/>
<organism>
    <name type="scientific">Prochlorococcus marinus (strain MIT 9312)</name>
    <dbReference type="NCBI Taxonomy" id="74546"/>
    <lineage>
        <taxon>Bacteria</taxon>
        <taxon>Bacillati</taxon>
        <taxon>Cyanobacteriota</taxon>
        <taxon>Cyanophyceae</taxon>
        <taxon>Synechococcales</taxon>
        <taxon>Prochlorococcaceae</taxon>
        <taxon>Prochlorococcus</taxon>
    </lineage>
</organism>
<comment type="function">
    <text evidence="2">Produces ATP from ADP in the presence of a proton gradient across the membrane. The alpha chain is a regulatory subunit.</text>
</comment>
<comment type="catalytic activity">
    <reaction evidence="2">
        <text>ATP + H2O + 4 H(+)(in) = ADP + phosphate + 5 H(+)(out)</text>
        <dbReference type="Rhea" id="RHEA:57720"/>
        <dbReference type="ChEBI" id="CHEBI:15377"/>
        <dbReference type="ChEBI" id="CHEBI:15378"/>
        <dbReference type="ChEBI" id="CHEBI:30616"/>
        <dbReference type="ChEBI" id="CHEBI:43474"/>
        <dbReference type="ChEBI" id="CHEBI:456216"/>
        <dbReference type="EC" id="7.1.2.2"/>
    </reaction>
</comment>
<comment type="subunit">
    <text evidence="1">F-type ATPases have 2 components, CF(1) - the catalytic core - and CF(0) - the membrane proton channel. CF(1) has five subunits: alpha(3), beta(3), gamma(1), delta(1), epsilon(1). CF(0) has four main subunits: a(1), b(1), b'(1) and c(9-12) (By similarity).</text>
</comment>
<comment type="subcellular location">
    <subcellularLocation>
        <location evidence="2">Cellular thylakoid membrane</location>
        <topology evidence="2">Peripheral membrane protein</topology>
    </subcellularLocation>
</comment>
<comment type="similarity">
    <text evidence="2">Belongs to the ATPase alpha/beta chains family.</text>
</comment>
<accession>Q318U1</accession>
<dbReference type="EC" id="7.1.2.2" evidence="2"/>
<dbReference type="EMBL" id="CP000111">
    <property type="protein sequence ID" value="ABB50604.1"/>
    <property type="molecule type" value="Genomic_DNA"/>
</dbReference>
<dbReference type="RefSeq" id="WP_011377087.1">
    <property type="nucleotide sequence ID" value="NC_007577.1"/>
</dbReference>
<dbReference type="SMR" id="Q318U1"/>
<dbReference type="STRING" id="74546.PMT9312_1544"/>
<dbReference type="KEGG" id="pmi:PMT9312_1544"/>
<dbReference type="eggNOG" id="COG0056">
    <property type="taxonomic scope" value="Bacteria"/>
</dbReference>
<dbReference type="HOGENOM" id="CLU_010091_2_1_3"/>
<dbReference type="OrthoDB" id="9803053at2"/>
<dbReference type="Proteomes" id="UP000002715">
    <property type="component" value="Chromosome"/>
</dbReference>
<dbReference type="GO" id="GO:0031676">
    <property type="term" value="C:plasma membrane-derived thylakoid membrane"/>
    <property type="evidence" value="ECO:0007669"/>
    <property type="project" value="UniProtKB-SubCell"/>
</dbReference>
<dbReference type="GO" id="GO:0045259">
    <property type="term" value="C:proton-transporting ATP synthase complex"/>
    <property type="evidence" value="ECO:0007669"/>
    <property type="project" value="UniProtKB-KW"/>
</dbReference>
<dbReference type="GO" id="GO:0043531">
    <property type="term" value="F:ADP binding"/>
    <property type="evidence" value="ECO:0007669"/>
    <property type="project" value="TreeGrafter"/>
</dbReference>
<dbReference type="GO" id="GO:0005524">
    <property type="term" value="F:ATP binding"/>
    <property type="evidence" value="ECO:0007669"/>
    <property type="project" value="UniProtKB-UniRule"/>
</dbReference>
<dbReference type="GO" id="GO:0046933">
    <property type="term" value="F:proton-transporting ATP synthase activity, rotational mechanism"/>
    <property type="evidence" value="ECO:0007669"/>
    <property type="project" value="UniProtKB-UniRule"/>
</dbReference>
<dbReference type="CDD" id="cd18113">
    <property type="entry name" value="ATP-synt_F1_alpha_C"/>
    <property type="match status" value="1"/>
</dbReference>
<dbReference type="CDD" id="cd18116">
    <property type="entry name" value="ATP-synt_F1_alpha_N"/>
    <property type="match status" value="1"/>
</dbReference>
<dbReference type="CDD" id="cd01132">
    <property type="entry name" value="F1-ATPase_alpha_CD"/>
    <property type="match status" value="1"/>
</dbReference>
<dbReference type="FunFam" id="1.20.150.20:FF:000001">
    <property type="entry name" value="ATP synthase subunit alpha"/>
    <property type="match status" value="1"/>
</dbReference>
<dbReference type="FunFam" id="2.40.30.20:FF:000001">
    <property type="entry name" value="ATP synthase subunit alpha"/>
    <property type="match status" value="1"/>
</dbReference>
<dbReference type="FunFam" id="3.40.50.300:FF:000002">
    <property type="entry name" value="ATP synthase subunit alpha"/>
    <property type="match status" value="1"/>
</dbReference>
<dbReference type="Gene3D" id="2.40.30.20">
    <property type="match status" value="1"/>
</dbReference>
<dbReference type="Gene3D" id="1.20.150.20">
    <property type="entry name" value="ATP synthase alpha/beta chain, C-terminal domain"/>
    <property type="match status" value="1"/>
</dbReference>
<dbReference type="Gene3D" id="3.40.50.300">
    <property type="entry name" value="P-loop containing nucleotide triphosphate hydrolases"/>
    <property type="match status" value="1"/>
</dbReference>
<dbReference type="HAMAP" id="MF_01346">
    <property type="entry name" value="ATP_synth_alpha_bact"/>
    <property type="match status" value="1"/>
</dbReference>
<dbReference type="InterPro" id="IPR023366">
    <property type="entry name" value="ATP_synth_asu-like_sf"/>
</dbReference>
<dbReference type="InterPro" id="IPR000793">
    <property type="entry name" value="ATP_synth_asu_C"/>
</dbReference>
<dbReference type="InterPro" id="IPR038376">
    <property type="entry name" value="ATP_synth_asu_C_sf"/>
</dbReference>
<dbReference type="InterPro" id="IPR033732">
    <property type="entry name" value="ATP_synth_F1_a_nt-bd_dom"/>
</dbReference>
<dbReference type="InterPro" id="IPR005294">
    <property type="entry name" value="ATP_synth_F1_asu"/>
</dbReference>
<dbReference type="InterPro" id="IPR020003">
    <property type="entry name" value="ATPase_a/bsu_AS"/>
</dbReference>
<dbReference type="InterPro" id="IPR004100">
    <property type="entry name" value="ATPase_F1/V1/A1_a/bsu_N"/>
</dbReference>
<dbReference type="InterPro" id="IPR036121">
    <property type="entry name" value="ATPase_F1/V1/A1_a/bsu_N_sf"/>
</dbReference>
<dbReference type="InterPro" id="IPR000194">
    <property type="entry name" value="ATPase_F1/V1/A1_a/bsu_nucl-bd"/>
</dbReference>
<dbReference type="InterPro" id="IPR027417">
    <property type="entry name" value="P-loop_NTPase"/>
</dbReference>
<dbReference type="NCBIfam" id="TIGR00962">
    <property type="entry name" value="atpA"/>
    <property type="match status" value="1"/>
</dbReference>
<dbReference type="NCBIfam" id="NF009884">
    <property type="entry name" value="PRK13343.1"/>
    <property type="match status" value="1"/>
</dbReference>
<dbReference type="PANTHER" id="PTHR48082">
    <property type="entry name" value="ATP SYNTHASE SUBUNIT ALPHA, MITOCHONDRIAL"/>
    <property type="match status" value="1"/>
</dbReference>
<dbReference type="PANTHER" id="PTHR48082:SF2">
    <property type="entry name" value="ATP SYNTHASE SUBUNIT ALPHA, MITOCHONDRIAL"/>
    <property type="match status" value="1"/>
</dbReference>
<dbReference type="Pfam" id="PF00006">
    <property type="entry name" value="ATP-synt_ab"/>
    <property type="match status" value="1"/>
</dbReference>
<dbReference type="Pfam" id="PF00306">
    <property type="entry name" value="ATP-synt_ab_C"/>
    <property type="match status" value="1"/>
</dbReference>
<dbReference type="Pfam" id="PF02874">
    <property type="entry name" value="ATP-synt_ab_N"/>
    <property type="match status" value="1"/>
</dbReference>
<dbReference type="PIRSF" id="PIRSF039088">
    <property type="entry name" value="F_ATPase_subunit_alpha"/>
    <property type="match status" value="1"/>
</dbReference>
<dbReference type="SUPFAM" id="SSF47917">
    <property type="entry name" value="C-terminal domain of alpha and beta subunits of F1 ATP synthase"/>
    <property type="match status" value="1"/>
</dbReference>
<dbReference type="SUPFAM" id="SSF50615">
    <property type="entry name" value="N-terminal domain of alpha and beta subunits of F1 ATP synthase"/>
    <property type="match status" value="1"/>
</dbReference>
<dbReference type="SUPFAM" id="SSF52540">
    <property type="entry name" value="P-loop containing nucleoside triphosphate hydrolases"/>
    <property type="match status" value="1"/>
</dbReference>
<dbReference type="PROSITE" id="PS00152">
    <property type="entry name" value="ATPASE_ALPHA_BETA"/>
    <property type="match status" value="1"/>
</dbReference>
<evidence type="ECO:0000250" key="1"/>
<evidence type="ECO:0000255" key="2">
    <source>
        <dbReference type="HAMAP-Rule" id="MF_01346"/>
    </source>
</evidence>
<name>ATPA_PROM9</name>
<keyword id="KW-0066">ATP synthesis</keyword>
<keyword id="KW-0067">ATP-binding</keyword>
<keyword id="KW-0139">CF(1)</keyword>
<keyword id="KW-0375">Hydrogen ion transport</keyword>
<keyword id="KW-0406">Ion transport</keyword>
<keyword id="KW-0472">Membrane</keyword>
<keyword id="KW-0547">Nucleotide-binding</keyword>
<keyword id="KW-0793">Thylakoid</keyword>
<keyword id="KW-1278">Translocase</keyword>
<keyword id="KW-0813">Transport</keyword>
<protein>
    <recommendedName>
        <fullName evidence="2">ATP synthase subunit alpha</fullName>
        <ecNumber evidence="2">7.1.2.2</ecNumber>
    </recommendedName>
    <alternativeName>
        <fullName evidence="2">ATP synthase F1 sector subunit alpha</fullName>
    </alternativeName>
    <alternativeName>
        <fullName evidence="2">F-ATPase subunit alpha</fullName>
    </alternativeName>
</protein>
<sequence length="505" mass="54242">MVSIRPDEISSILKQQITDYDQSVSVSNVGTVLQIGDGIARIYGLDQVMAGELLEFEDGTEGIALNLEDDNVGAVLMGEALGVQEGSNVKSTGKIASVPVGEAMQGRVVNPLGQPIDGKGEIPTSDTRLIEEMAPGIIKRRSVHEPMQTGITSIDAMIPVGRGQRELIIGDRQTGKSAIAIDTIINQKGQDVVCVYVAIGQKSASVANVVEVLREKGALDYTIVVSAGASEAAALQYLAPYTGAAIAEHFMYQGKATLVIYDDLTKQAQAYRQMSLLLRRPPGREAYPGDVFYCHSRLLERAAKLSDDMGGGSMTALPIIETQAGDVSAYIPTNVISITDGQIFLSADLFNSGLRPAINVGISVSRVGGAAQTKAIKKIAGTLKLELAQFDELAAFSQFASDLDEATQQQLERGKRLRELLKQAQFSPLNLAEQVAVVYAGVKGLIDEVPVEDVTKFAAELREYLKLNKAEFIEEILKEKKLNDGLEATLKEVIKEVKSSMLATV</sequence>
<gene>
    <name evidence="2" type="primary">atpA</name>
    <name type="ordered locus">PMT9312_1544</name>
</gene>
<feature type="chain" id="PRO_0000238321" description="ATP synthase subunit alpha">
    <location>
        <begin position="1"/>
        <end position="505"/>
    </location>
</feature>
<feature type="binding site" evidence="2">
    <location>
        <begin position="170"/>
        <end position="177"/>
    </location>
    <ligand>
        <name>ATP</name>
        <dbReference type="ChEBI" id="CHEBI:30616"/>
    </ligand>
</feature>
<feature type="site" description="Required for activity" evidence="2">
    <location>
        <position position="363"/>
    </location>
</feature>